<keyword id="KW-0472">Membrane</keyword>
<keyword id="KW-1185">Reference proteome</keyword>
<keyword id="KW-0812">Transmembrane</keyword>
<keyword id="KW-1133">Transmembrane helix</keyword>
<protein>
    <recommendedName>
        <fullName>Uncharacterized protein Mb2226</fullName>
    </recommendedName>
</protein>
<feature type="chain" id="PRO_0000103973" description="Uncharacterized protein Mb2226">
    <location>
        <begin position="1"/>
        <end position="230"/>
    </location>
</feature>
<feature type="transmembrane region" description="Helical" evidence="1">
    <location>
        <begin position="75"/>
        <end position="95"/>
    </location>
</feature>
<feature type="region of interest" description="Disordered" evidence="2">
    <location>
        <begin position="1"/>
        <end position="57"/>
    </location>
</feature>
<feature type="compositionally biased region" description="Low complexity" evidence="2">
    <location>
        <begin position="38"/>
        <end position="55"/>
    </location>
</feature>
<evidence type="ECO:0000255" key="1"/>
<evidence type="ECO:0000256" key="2">
    <source>
        <dbReference type="SAM" id="MobiDB-lite"/>
    </source>
</evidence>
<evidence type="ECO:0000305" key="3"/>
<proteinExistence type="predicted"/>
<accession>P64950</accession>
<accession>A0A1R3Y2M5</accession>
<accession>Q10392</accession>
<accession>X2BK48</accession>
<organism>
    <name type="scientific">Mycobacterium bovis (strain ATCC BAA-935 / AF2122/97)</name>
    <dbReference type="NCBI Taxonomy" id="233413"/>
    <lineage>
        <taxon>Bacteria</taxon>
        <taxon>Bacillati</taxon>
        <taxon>Actinomycetota</taxon>
        <taxon>Actinomycetes</taxon>
        <taxon>Mycobacteriales</taxon>
        <taxon>Mycobacteriaceae</taxon>
        <taxon>Mycobacterium</taxon>
        <taxon>Mycobacterium tuberculosis complex</taxon>
    </lineage>
</organism>
<gene>
    <name type="ordered locus">BQ2027_MB2226</name>
</gene>
<dbReference type="EMBL" id="LT708304">
    <property type="protein sequence ID" value="SIU00834.1"/>
    <property type="molecule type" value="Genomic_DNA"/>
</dbReference>
<dbReference type="RefSeq" id="NP_855875.1">
    <property type="nucleotide sequence ID" value="NC_002945.3"/>
</dbReference>
<dbReference type="RefSeq" id="WP_003411415.1">
    <property type="nucleotide sequence ID" value="NC_002945.4"/>
</dbReference>
<dbReference type="SMR" id="P64950"/>
<dbReference type="KEGG" id="mbo:BQ2027_MB2226"/>
<dbReference type="PATRIC" id="fig|233413.5.peg.2442"/>
<dbReference type="Proteomes" id="UP000001419">
    <property type="component" value="Chromosome"/>
</dbReference>
<dbReference type="GO" id="GO:0016020">
    <property type="term" value="C:membrane"/>
    <property type="evidence" value="ECO:0007669"/>
    <property type="project" value="UniProtKB-SubCell"/>
</dbReference>
<reference key="1">
    <citation type="journal article" date="2003" name="Proc. Natl. Acad. Sci. U.S.A.">
        <title>The complete genome sequence of Mycobacterium bovis.</title>
        <authorList>
            <person name="Garnier T."/>
            <person name="Eiglmeier K."/>
            <person name="Camus J.-C."/>
            <person name="Medina N."/>
            <person name="Mansoor H."/>
            <person name="Pryor M."/>
            <person name="Duthoy S."/>
            <person name="Grondin S."/>
            <person name="Lacroix C."/>
            <person name="Monsempe C."/>
            <person name="Simon S."/>
            <person name="Harris B."/>
            <person name="Atkin R."/>
            <person name="Doggett J."/>
            <person name="Mayes R."/>
            <person name="Keating L."/>
            <person name="Wheeler P.R."/>
            <person name="Parkhill J."/>
            <person name="Barrell B.G."/>
            <person name="Cole S.T."/>
            <person name="Gordon S.V."/>
            <person name="Hewinson R.G."/>
        </authorList>
    </citation>
    <scope>NUCLEOTIDE SEQUENCE [LARGE SCALE GENOMIC DNA]</scope>
    <source>
        <strain>ATCC BAA-935 / AF2122/97</strain>
    </source>
</reference>
<reference key="2">
    <citation type="journal article" date="2017" name="Genome Announc.">
        <title>Updated reference genome sequence and annotation of Mycobacterium bovis AF2122/97.</title>
        <authorList>
            <person name="Malone K.M."/>
            <person name="Farrell D."/>
            <person name="Stuber T.P."/>
            <person name="Schubert O.T."/>
            <person name="Aebersold R."/>
            <person name="Robbe-Austerman S."/>
            <person name="Gordon S.V."/>
        </authorList>
    </citation>
    <scope>NUCLEOTIDE SEQUENCE [LARGE SCALE GENOMIC DNA]</scope>
    <scope>GENOME REANNOTATION</scope>
    <source>
        <strain>ATCC BAA-935 / AF2122/97</strain>
    </source>
</reference>
<name>Y2226_MYCBO</name>
<sequence>MPGPHSPNPGVGTNGPAPYPEPSSHEPQALDYPHDLGAAEPAFAPGPADDAALPPAAYPGVPPQVSYPKRRHKRLLIGIVVALALVSAMTAAIIYGVRTNGANTAGTFSEGPAKTAIQGYLNALENRDVDTIVRNALCGIHDGVRDKRSDQALAKLSSDAFRKQFSQVEVTSIDKIVYWSQYQAQVLFTMQVTPAAGGPPRGQVQGIAQLLFQRGQVLVCSYVLRTAGSY</sequence>
<comment type="subcellular location">
    <subcellularLocation>
        <location evidence="3">Membrane</location>
        <topology evidence="3">Single-pass membrane protein</topology>
    </subcellularLocation>
</comment>